<protein>
    <recommendedName>
        <fullName evidence="1">Integration host factor subunit beta</fullName>
        <shortName evidence="1">IHF-beta</shortName>
    </recommendedName>
</protein>
<accession>Q6D404</accession>
<dbReference type="EMBL" id="BX950851">
    <property type="protein sequence ID" value="CAG75489.1"/>
    <property type="molecule type" value="Genomic_DNA"/>
</dbReference>
<dbReference type="RefSeq" id="WP_005967571.1">
    <property type="nucleotide sequence ID" value="NC_004547.2"/>
</dbReference>
<dbReference type="SMR" id="Q6D404"/>
<dbReference type="STRING" id="218491.ECA2590"/>
<dbReference type="GeneID" id="93389979"/>
<dbReference type="KEGG" id="eca:ECA2590"/>
<dbReference type="eggNOG" id="COG0776">
    <property type="taxonomic scope" value="Bacteria"/>
</dbReference>
<dbReference type="HOGENOM" id="CLU_105066_2_0_6"/>
<dbReference type="OrthoDB" id="9804203at2"/>
<dbReference type="Proteomes" id="UP000007966">
    <property type="component" value="Chromosome"/>
</dbReference>
<dbReference type="GO" id="GO:0005694">
    <property type="term" value="C:chromosome"/>
    <property type="evidence" value="ECO:0007669"/>
    <property type="project" value="InterPro"/>
</dbReference>
<dbReference type="GO" id="GO:0005829">
    <property type="term" value="C:cytosol"/>
    <property type="evidence" value="ECO:0007669"/>
    <property type="project" value="TreeGrafter"/>
</dbReference>
<dbReference type="GO" id="GO:0003677">
    <property type="term" value="F:DNA binding"/>
    <property type="evidence" value="ECO:0007669"/>
    <property type="project" value="UniProtKB-UniRule"/>
</dbReference>
<dbReference type="GO" id="GO:0030527">
    <property type="term" value="F:structural constituent of chromatin"/>
    <property type="evidence" value="ECO:0007669"/>
    <property type="project" value="InterPro"/>
</dbReference>
<dbReference type="GO" id="GO:0006310">
    <property type="term" value="P:DNA recombination"/>
    <property type="evidence" value="ECO:0007669"/>
    <property type="project" value="UniProtKB-UniRule"/>
</dbReference>
<dbReference type="GO" id="GO:0006355">
    <property type="term" value="P:regulation of DNA-templated transcription"/>
    <property type="evidence" value="ECO:0007669"/>
    <property type="project" value="UniProtKB-UniRule"/>
</dbReference>
<dbReference type="GO" id="GO:0006417">
    <property type="term" value="P:regulation of translation"/>
    <property type="evidence" value="ECO:0007669"/>
    <property type="project" value="UniProtKB-UniRule"/>
</dbReference>
<dbReference type="CDD" id="cd13836">
    <property type="entry name" value="IHF_B"/>
    <property type="match status" value="1"/>
</dbReference>
<dbReference type="FunFam" id="4.10.520.10:FF:000003">
    <property type="entry name" value="Integration host factor subunit beta"/>
    <property type="match status" value="1"/>
</dbReference>
<dbReference type="Gene3D" id="4.10.520.10">
    <property type="entry name" value="IHF-like DNA-binding proteins"/>
    <property type="match status" value="1"/>
</dbReference>
<dbReference type="HAMAP" id="MF_00381">
    <property type="entry name" value="IHF_beta"/>
    <property type="match status" value="1"/>
</dbReference>
<dbReference type="InterPro" id="IPR000119">
    <property type="entry name" value="Hist_DNA-bd"/>
</dbReference>
<dbReference type="InterPro" id="IPR020816">
    <property type="entry name" value="Histone-like_DNA-bd_CS"/>
</dbReference>
<dbReference type="InterPro" id="IPR010992">
    <property type="entry name" value="IHF-like_DNA-bd_dom_sf"/>
</dbReference>
<dbReference type="InterPro" id="IPR005685">
    <property type="entry name" value="IHF_beta"/>
</dbReference>
<dbReference type="NCBIfam" id="TIGR00988">
    <property type="entry name" value="hip"/>
    <property type="match status" value="1"/>
</dbReference>
<dbReference type="NCBIfam" id="NF001222">
    <property type="entry name" value="PRK00199.1"/>
    <property type="match status" value="1"/>
</dbReference>
<dbReference type="PANTHER" id="PTHR33175">
    <property type="entry name" value="DNA-BINDING PROTEIN HU"/>
    <property type="match status" value="1"/>
</dbReference>
<dbReference type="PANTHER" id="PTHR33175:SF5">
    <property type="entry name" value="INTEGRATION HOST FACTOR SUBUNIT BETA"/>
    <property type="match status" value="1"/>
</dbReference>
<dbReference type="Pfam" id="PF00216">
    <property type="entry name" value="Bac_DNA_binding"/>
    <property type="match status" value="1"/>
</dbReference>
<dbReference type="PRINTS" id="PR01727">
    <property type="entry name" value="DNABINDINGHU"/>
</dbReference>
<dbReference type="SMART" id="SM00411">
    <property type="entry name" value="BHL"/>
    <property type="match status" value="1"/>
</dbReference>
<dbReference type="SUPFAM" id="SSF47729">
    <property type="entry name" value="IHF-like DNA-binding proteins"/>
    <property type="match status" value="1"/>
</dbReference>
<dbReference type="PROSITE" id="PS00045">
    <property type="entry name" value="HISTONE_LIKE"/>
    <property type="match status" value="1"/>
</dbReference>
<feature type="chain" id="PRO_1000060604" description="Integration host factor subunit beta">
    <location>
        <begin position="1"/>
        <end position="94"/>
    </location>
</feature>
<evidence type="ECO:0000255" key="1">
    <source>
        <dbReference type="HAMAP-Rule" id="MF_00381"/>
    </source>
</evidence>
<comment type="function">
    <text evidence="1">This protein is one of the two subunits of integration host factor, a specific DNA-binding protein that functions in genetic recombination as well as in transcriptional and translational control.</text>
</comment>
<comment type="subunit">
    <text evidence="1">Heterodimer of an alpha and a beta chain.</text>
</comment>
<comment type="similarity">
    <text evidence="1">Belongs to the bacterial histone-like protein family.</text>
</comment>
<sequence length="94" mass="10581">MTKSELIERLAGQQSHIPAKVVEDAVKEMLEQMASTLAEGDRIEIRGFGSFSLHYRAPRVGRNPKTGDKVELEGKYVPHFKPGKELRDRANIYG</sequence>
<name>IHFB_PECAS</name>
<keyword id="KW-0233">DNA recombination</keyword>
<keyword id="KW-0238">DNA-binding</keyword>
<keyword id="KW-1185">Reference proteome</keyword>
<keyword id="KW-0804">Transcription</keyword>
<keyword id="KW-0805">Transcription regulation</keyword>
<keyword id="KW-0810">Translation regulation</keyword>
<organism>
    <name type="scientific">Pectobacterium atrosepticum (strain SCRI 1043 / ATCC BAA-672)</name>
    <name type="common">Erwinia carotovora subsp. atroseptica</name>
    <dbReference type="NCBI Taxonomy" id="218491"/>
    <lineage>
        <taxon>Bacteria</taxon>
        <taxon>Pseudomonadati</taxon>
        <taxon>Pseudomonadota</taxon>
        <taxon>Gammaproteobacteria</taxon>
        <taxon>Enterobacterales</taxon>
        <taxon>Pectobacteriaceae</taxon>
        <taxon>Pectobacterium</taxon>
    </lineage>
</organism>
<proteinExistence type="inferred from homology"/>
<gene>
    <name evidence="1" type="primary">ihfB</name>
    <name evidence="1" type="synonym">himD</name>
    <name type="ordered locus">ECA2590</name>
</gene>
<reference key="1">
    <citation type="journal article" date="2004" name="Proc. Natl. Acad. Sci. U.S.A.">
        <title>Genome sequence of the enterobacterial phytopathogen Erwinia carotovora subsp. atroseptica and characterization of virulence factors.</title>
        <authorList>
            <person name="Bell K.S."/>
            <person name="Sebaihia M."/>
            <person name="Pritchard L."/>
            <person name="Holden M.T.G."/>
            <person name="Hyman L.J."/>
            <person name="Holeva M.C."/>
            <person name="Thomson N.R."/>
            <person name="Bentley S.D."/>
            <person name="Churcher L.J.C."/>
            <person name="Mungall K."/>
            <person name="Atkin R."/>
            <person name="Bason N."/>
            <person name="Brooks K."/>
            <person name="Chillingworth T."/>
            <person name="Clark K."/>
            <person name="Doggett J."/>
            <person name="Fraser A."/>
            <person name="Hance Z."/>
            <person name="Hauser H."/>
            <person name="Jagels K."/>
            <person name="Moule S."/>
            <person name="Norbertczak H."/>
            <person name="Ormond D."/>
            <person name="Price C."/>
            <person name="Quail M.A."/>
            <person name="Sanders M."/>
            <person name="Walker D."/>
            <person name="Whitehead S."/>
            <person name="Salmond G.P.C."/>
            <person name="Birch P.R.J."/>
            <person name="Parkhill J."/>
            <person name="Toth I.K."/>
        </authorList>
    </citation>
    <scope>NUCLEOTIDE SEQUENCE [LARGE SCALE GENOMIC DNA]</scope>
    <source>
        <strain>SCRI 1043 / ATCC BAA-672</strain>
    </source>
</reference>